<evidence type="ECO:0000255" key="1">
    <source>
        <dbReference type="HAMAP-Rule" id="MF_01354"/>
    </source>
</evidence>
<organism>
    <name type="scientific">Synechococcus sp. (strain CC9605)</name>
    <dbReference type="NCBI Taxonomy" id="110662"/>
    <lineage>
        <taxon>Bacteria</taxon>
        <taxon>Bacillati</taxon>
        <taxon>Cyanobacteriota</taxon>
        <taxon>Cyanophyceae</taxon>
        <taxon>Synechococcales</taxon>
        <taxon>Synechococcaceae</taxon>
        <taxon>Synechococcus</taxon>
    </lineage>
</organism>
<feature type="chain" id="PRO_0000353655" description="NAD(P)H-quinone oxidoreductase subunit O">
    <location>
        <begin position="1"/>
        <end position="84"/>
    </location>
</feature>
<reference key="1">
    <citation type="submission" date="2005-07" db="EMBL/GenBank/DDBJ databases">
        <title>Complete sequence of Synechococcus sp. CC9605.</title>
        <authorList>
            <consortium name="US DOE Joint Genome Institute"/>
            <person name="Copeland A."/>
            <person name="Lucas S."/>
            <person name="Lapidus A."/>
            <person name="Barry K."/>
            <person name="Detter J.C."/>
            <person name="Glavina T."/>
            <person name="Hammon N."/>
            <person name="Israni S."/>
            <person name="Pitluck S."/>
            <person name="Schmutz J."/>
            <person name="Martinez M."/>
            <person name="Larimer F."/>
            <person name="Land M."/>
            <person name="Kyrpides N."/>
            <person name="Ivanova N."/>
            <person name="Richardson P."/>
        </authorList>
    </citation>
    <scope>NUCLEOTIDE SEQUENCE [LARGE SCALE GENOMIC DNA]</scope>
    <source>
        <strain>CC9605</strain>
    </source>
</reference>
<proteinExistence type="inferred from homology"/>
<gene>
    <name evidence="1" type="primary">ndhO</name>
    <name type="ordered locus">Syncc9605_2362</name>
</gene>
<protein>
    <recommendedName>
        <fullName evidence="1">NAD(P)H-quinone oxidoreductase subunit O</fullName>
        <ecNumber evidence="1">7.1.1.-</ecNumber>
    </recommendedName>
    <alternativeName>
        <fullName evidence="1">NAD(P)H dehydrogenase I subunit O</fullName>
    </alternativeName>
    <alternativeName>
        <fullName>NDH-1 subunit O</fullName>
    </alternativeName>
    <alternativeName>
        <fullName>NDH-O</fullName>
    </alternativeName>
</protein>
<name>NDHO_SYNSC</name>
<accession>Q3AH38</accession>
<sequence length="84" mass="8946">MAESDAAAPAKAKPAALRKGALVKVNRAAYSSSLEAGASDPTAPDYIFEGPGELLVVKGDYGQVRWNRPVPDVWLRMDQLEACS</sequence>
<keyword id="KW-0472">Membrane</keyword>
<keyword id="KW-0520">NAD</keyword>
<keyword id="KW-0521">NADP</keyword>
<keyword id="KW-0618">Plastoquinone</keyword>
<keyword id="KW-0874">Quinone</keyword>
<keyword id="KW-0793">Thylakoid</keyword>
<keyword id="KW-1278">Translocase</keyword>
<keyword id="KW-0813">Transport</keyword>
<comment type="function">
    <text evidence="1">NDH-1 shuttles electrons from an unknown electron donor, via FMN and iron-sulfur (Fe-S) centers, to quinones in the respiratory and/or the photosynthetic chain. The immediate electron acceptor for the enzyme in this species is believed to be plastoquinone. Couples the redox reaction to proton translocation, and thus conserves the redox energy in a proton gradient. Cyanobacterial NDH-1 also plays a role in inorganic carbon-concentration.</text>
</comment>
<comment type="catalytic activity">
    <reaction evidence="1">
        <text>a plastoquinone + NADH + (n+1) H(+)(in) = a plastoquinol + NAD(+) + n H(+)(out)</text>
        <dbReference type="Rhea" id="RHEA:42608"/>
        <dbReference type="Rhea" id="RHEA-COMP:9561"/>
        <dbReference type="Rhea" id="RHEA-COMP:9562"/>
        <dbReference type="ChEBI" id="CHEBI:15378"/>
        <dbReference type="ChEBI" id="CHEBI:17757"/>
        <dbReference type="ChEBI" id="CHEBI:57540"/>
        <dbReference type="ChEBI" id="CHEBI:57945"/>
        <dbReference type="ChEBI" id="CHEBI:62192"/>
    </reaction>
</comment>
<comment type="catalytic activity">
    <reaction evidence="1">
        <text>a plastoquinone + NADPH + (n+1) H(+)(in) = a plastoquinol + NADP(+) + n H(+)(out)</text>
        <dbReference type="Rhea" id="RHEA:42612"/>
        <dbReference type="Rhea" id="RHEA-COMP:9561"/>
        <dbReference type="Rhea" id="RHEA-COMP:9562"/>
        <dbReference type="ChEBI" id="CHEBI:15378"/>
        <dbReference type="ChEBI" id="CHEBI:17757"/>
        <dbReference type="ChEBI" id="CHEBI:57783"/>
        <dbReference type="ChEBI" id="CHEBI:58349"/>
        <dbReference type="ChEBI" id="CHEBI:62192"/>
    </reaction>
</comment>
<comment type="subunit">
    <text evidence="1">NDH-1 can be composed of about 15 different subunits; different subcomplexes with different compositions have been identified which probably have different functions.</text>
</comment>
<comment type="subcellular location">
    <subcellularLocation>
        <location evidence="1">Cellular thylakoid membrane</location>
        <topology evidence="1">Peripheral membrane protein</topology>
        <orientation evidence="1">Cytoplasmic side</orientation>
    </subcellularLocation>
</comment>
<comment type="similarity">
    <text evidence="1">Belongs to the complex I NdhO subunit family.</text>
</comment>
<dbReference type="EC" id="7.1.1.-" evidence="1"/>
<dbReference type="EMBL" id="CP000110">
    <property type="protein sequence ID" value="ABB36094.1"/>
    <property type="molecule type" value="Genomic_DNA"/>
</dbReference>
<dbReference type="RefSeq" id="WP_006850906.1">
    <property type="nucleotide sequence ID" value="NC_007516.1"/>
</dbReference>
<dbReference type="SMR" id="Q3AH38"/>
<dbReference type="STRING" id="110662.Syncc9605_2362"/>
<dbReference type="KEGG" id="syd:Syncc9605_2362"/>
<dbReference type="eggNOG" id="ENOG5032XZT">
    <property type="taxonomic scope" value="Bacteria"/>
</dbReference>
<dbReference type="HOGENOM" id="CLU_195299_0_0_3"/>
<dbReference type="OrthoDB" id="426633at2"/>
<dbReference type="GO" id="GO:0031676">
    <property type="term" value="C:plasma membrane-derived thylakoid membrane"/>
    <property type="evidence" value="ECO:0007669"/>
    <property type="project" value="UniProtKB-SubCell"/>
</dbReference>
<dbReference type="GO" id="GO:0016655">
    <property type="term" value="F:oxidoreductase activity, acting on NAD(P)H, quinone or similar compound as acceptor"/>
    <property type="evidence" value="ECO:0007669"/>
    <property type="project" value="UniProtKB-UniRule"/>
</dbReference>
<dbReference type="GO" id="GO:0048038">
    <property type="term" value="F:quinone binding"/>
    <property type="evidence" value="ECO:0007669"/>
    <property type="project" value="UniProtKB-KW"/>
</dbReference>
<dbReference type="HAMAP" id="MF_01354">
    <property type="entry name" value="NDH1_NDH1O"/>
    <property type="match status" value="1"/>
</dbReference>
<dbReference type="InterPro" id="IPR020905">
    <property type="entry name" value="NdhO"/>
</dbReference>
<dbReference type="Pfam" id="PF11910">
    <property type="entry name" value="NdhO"/>
    <property type="match status" value="1"/>
</dbReference>